<keyword id="KW-0687">Ribonucleoprotein</keyword>
<keyword id="KW-0689">Ribosomal protein</keyword>
<accession>A6UT96</accession>
<feature type="chain" id="PRO_1000049911" description="Large ribosomal subunit protein eL31">
    <location>
        <begin position="1"/>
        <end position="83"/>
    </location>
</feature>
<comment type="similarity">
    <text evidence="1">Belongs to the eukaryotic ribosomal protein eL31 family.</text>
</comment>
<organism>
    <name type="scientific">Methanococcus aeolicus (strain ATCC BAA-1280 / DSM 17508 / OCM 812 / Nankai-3)</name>
    <dbReference type="NCBI Taxonomy" id="419665"/>
    <lineage>
        <taxon>Archaea</taxon>
        <taxon>Methanobacteriati</taxon>
        <taxon>Methanobacteriota</taxon>
        <taxon>Methanomada group</taxon>
        <taxon>Methanococci</taxon>
        <taxon>Methanococcales</taxon>
        <taxon>Methanococcaceae</taxon>
        <taxon>Methanococcus</taxon>
    </lineage>
</organism>
<gene>
    <name evidence="1" type="primary">rpl31e</name>
    <name type="ordered locus">Maeo_0126</name>
</gene>
<evidence type="ECO:0000255" key="1">
    <source>
        <dbReference type="HAMAP-Rule" id="MF_00410"/>
    </source>
</evidence>
<evidence type="ECO:0000305" key="2"/>
<proteinExistence type="inferred from homology"/>
<sequence length="83" mass="9817">MEDERIYTIPLRDVTNNSPSTKRAPRAMRKIRDFLKRHTKSDNIKIDNSINEKVWERSLNKIPARIRVKVVKEDDMVIATLIK</sequence>
<protein>
    <recommendedName>
        <fullName evidence="1">Large ribosomal subunit protein eL31</fullName>
    </recommendedName>
    <alternativeName>
        <fullName evidence="2">50S ribosomal protein L31e</fullName>
    </alternativeName>
</protein>
<name>RL31_META3</name>
<reference key="1">
    <citation type="submission" date="2007-06" db="EMBL/GenBank/DDBJ databases">
        <title>Complete sequence of Methanococcus aeolicus Nankai-3.</title>
        <authorList>
            <consortium name="US DOE Joint Genome Institute"/>
            <person name="Copeland A."/>
            <person name="Lucas S."/>
            <person name="Lapidus A."/>
            <person name="Barry K."/>
            <person name="Glavina del Rio T."/>
            <person name="Dalin E."/>
            <person name="Tice H."/>
            <person name="Pitluck S."/>
            <person name="Chain P."/>
            <person name="Malfatti S."/>
            <person name="Shin M."/>
            <person name="Vergez L."/>
            <person name="Schmutz J."/>
            <person name="Larimer F."/>
            <person name="Land M."/>
            <person name="Hauser L."/>
            <person name="Kyrpides N."/>
            <person name="Lykidis A."/>
            <person name="Sieprawska-Lupa M."/>
            <person name="Whitman W.B."/>
            <person name="Richardson P."/>
        </authorList>
    </citation>
    <scope>NUCLEOTIDE SEQUENCE [LARGE SCALE GENOMIC DNA]</scope>
    <source>
        <strain>ATCC BAA-1280 / DSM 17508 / OCM 812 / Nankai-3</strain>
    </source>
</reference>
<dbReference type="EMBL" id="CP000743">
    <property type="protein sequence ID" value="ABR55718.1"/>
    <property type="molecule type" value="Genomic_DNA"/>
</dbReference>
<dbReference type="RefSeq" id="WP_011972850.1">
    <property type="nucleotide sequence ID" value="NC_009635.1"/>
</dbReference>
<dbReference type="SMR" id="A6UT96"/>
<dbReference type="STRING" id="419665.Maeo_0126"/>
<dbReference type="GeneID" id="5326452"/>
<dbReference type="KEGG" id="mae:Maeo_0126"/>
<dbReference type="eggNOG" id="arCOG04473">
    <property type="taxonomic scope" value="Archaea"/>
</dbReference>
<dbReference type="HOGENOM" id="CLU_112570_3_2_2"/>
<dbReference type="OrthoDB" id="10127at2157"/>
<dbReference type="Proteomes" id="UP000001106">
    <property type="component" value="Chromosome"/>
</dbReference>
<dbReference type="GO" id="GO:0022625">
    <property type="term" value="C:cytosolic large ribosomal subunit"/>
    <property type="evidence" value="ECO:0007669"/>
    <property type="project" value="TreeGrafter"/>
</dbReference>
<dbReference type="GO" id="GO:0003735">
    <property type="term" value="F:structural constituent of ribosome"/>
    <property type="evidence" value="ECO:0007669"/>
    <property type="project" value="InterPro"/>
</dbReference>
<dbReference type="GO" id="GO:0002181">
    <property type="term" value="P:cytoplasmic translation"/>
    <property type="evidence" value="ECO:0007669"/>
    <property type="project" value="TreeGrafter"/>
</dbReference>
<dbReference type="CDD" id="cd00463">
    <property type="entry name" value="Ribosomal_L31e"/>
    <property type="match status" value="1"/>
</dbReference>
<dbReference type="Gene3D" id="3.10.440.10">
    <property type="match status" value="1"/>
</dbReference>
<dbReference type="HAMAP" id="MF_00410">
    <property type="entry name" value="Ribosomal_eL31"/>
    <property type="match status" value="1"/>
</dbReference>
<dbReference type="InterPro" id="IPR000054">
    <property type="entry name" value="Ribosomal_eL31"/>
</dbReference>
<dbReference type="InterPro" id="IPR020052">
    <property type="entry name" value="Ribosomal_eL31_CS"/>
</dbReference>
<dbReference type="InterPro" id="IPR023621">
    <property type="entry name" value="Ribosomal_eL31_dom_sf"/>
</dbReference>
<dbReference type="NCBIfam" id="NF002258">
    <property type="entry name" value="PRK01192.1-1"/>
    <property type="match status" value="1"/>
</dbReference>
<dbReference type="PANTHER" id="PTHR10956">
    <property type="entry name" value="60S RIBOSOMAL PROTEIN L31"/>
    <property type="match status" value="1"/>
</dbReference>
<dbReference type="PANTHER" id="PTHR10956:SF0">
    <property type="entry name" value="60S RIBOSOMAL PROTEIN L31"/>
    <property type="match status" value="1"/>
</dbReference>
<dbReference type="Pfam" id="PF01198">
    <property type="entry name" value="Ribosomal_L31e"/>
    <property type="match status" value="1"/>
</dbReference>
<dbReference type="SMART" id="SM01380">
    <property type="entry name" value="Ribosomal_L31e"/>
    <property type="match status" value="1"/>
</dbReference>
<dbReference type="SUPFAM" id="SSF54575">
    <property type="entry name" value="Ribosomal protein L31e"/>
    <property type="match status" value="1"/>
</dbReference>
<dbReference type="PROSITE" id="PS01144">
    <property type="entry name" value="RIBOSOMAL_L31E"/>
    <property type="match status" value="1"/>
</dbReference>